<protein>
    <recommendedName>
        <fullName evidence="1">UPF0283 membrane protein BCAN_A1047</fullName>
    </recommendedName>
</protein>
<sequence>MSDKTPRKPTAFRLEQPARVSAASEQEEPRRPRAVKDLEQITPQADVFDLTDDEAAELEILDPAFEAPERKGWSLSRILFGALGILVSFAIGIWTEDLIRALFARADWLGWTALGVAMVALAAFAAIILRELVALRRLASVQHLRKDAADAAERDDMAAARKAVDALRTIAAGIPETAKGRQLLDSLTDDIIDGRDLIRLAETEILRPLDREARTLVLNASKRVSIVTAISPRALVDIGYVIFESARLIRRLSQLYGGRPGTFGFIKLARRVIAHLAVTGTIAMGDSVIQQLVGHGLASRLSAKLGEGVVNGLMTARIGIAAMDVVRPFPFNAEKRPGIGDFIGDLARLNSDRNARK</sequence>
<organism>
    <name type="scientific">Brucella canis (strain ATCC 23365 / NCTC 10854 / RM-666)</name>
    <dbReference type="NCBI Taxonomy" id="483179"/>
    <lineage>
        <taxon>Bacteria</taxon>
        <taxon>Pseudomonadati</taxon>
        <taxon>Pseudomonadota</taxon>
        <taxon>Alphaproteobacteria</taxon>
        <taxon>Hyphomicrobiales</taxon>
        <taxon>Brucellaceae</taxon>
        <taxon>Brucella/Ochrobactrum group</taxon>
        <taxon>Brucella</taxon>
    </lineage>
</organism>
<feature type="chain" id="PRO_1000084777" description="UPF0283 membrane protein BCAN_A1047">
    <location>
        <begin position="1"/>
        <end position="357"/>
    </location>
</feature>
<feature type="transmembrane region" description="Helical" evidence="1">
    <location>
        <begin position="78"/>
        <end position="98"/>
    </location>
</feature>
<feature type="transmembrane region" description="Helical" evidence="1">
    <location>
        <begin position="109"/>
        <end position="129"/>
    </location>
</feature>
<feature type="region of interest" description="Disordered" evidence="2">
    <location>
        <begin position="1"/>
        <end position="36"/>
    </location>
</feature>
<feature type="compositionally biased region" description="Basic and acidic residues" evidence="2">
    <location>
        <begin position="27"/>
        <end position="36"/>
    </location>
</feature>
<evidence type="ECO:0000255" key="1">
    <source>
        <dbReference type="HAMAP-Rule" id="MF_01085"/>
    </source>
</evidence>
<evidence type="ECO:0000256" key="2">
    <source>
        <dbReference type="SAM" id="MobiDB-lite"/>
    </source>
</evidence>
<reference key="1">
    <citation type="submission" date="2007-10" db="EMBL/GenBank/DDBJ databases">
        <title>Brucella canis ATCC 23365 whole genome shotgun sequencing project.</title>
        <authorList>
            <person name="Setubal J.C."/>
            <person name="Bowns C."/>
            <person name="Boyle S."/>
            <person name="Crasta O.R."/>
            <person name="Czar M.J."/>
            <person name="Dharmanolla C."/>
            <person name="Gillespie J.J."/>
            <person name="Kenyon R.W."/>
            <person name="Lu J."/>
            <person name="Mane S."/>
            <person name="Mohapatra S."/>
            <person name="Nagrani S."/>
            <person name="Purkayastha A."/>
            <person name="Rajasimha H.K."/>
            <person name="Shallom J.M."/>
            <person name="Shallom S."/>
            <person name="Shukla M."/>
            <person name="Snyder E.E."/>
            <person name="Sobral B.W."/>
            <person name="Wattam A.R."/>
            <person name="Will R."/>
            <person name="Williams K."/>
            <person name="Yoo H."/>
            <person name="Bruce D."/>
            <person name="Detter C."/>
            <person name="Munk C."/>
            <person name="Brettin T.S."/>
        </authorList>
    </citation>
    <scope>NUCLEOTIDE SEQUENCE [LARGE SCALE GENOMIC DNA]</scope>
    <source>
        <strain>ATCC 23365 / NCTC 10854 / RM-666</strain>
    </source>
</reference>
<gene>
    <name type="ordered locus">BCAN_A1047</name>
</gene>
<keyword id="KW-0997">Cell inner membrane</keyword>
<keyword id="KW-1003">Cell membrane</keyword>
<keyword id="KW-0472">Membrane</keyword>
<keyword id="KW-1185">Reference proteome</keyword>
<keyword id="KW-0812">Transmembrane</keyword>
<keyword id="KW-1133">Transmembrane helix</keyword>
<name>Y1047_BRUC2</name>
<proteinExistence type="inferred from homology"/>
<dbReference type="EMBL" id="CP000872">
    <property type="protein sequence ID" value="ABX62100.1"/>
    <property type="molecule type" value="Genomic_DNA"/>
</dbReference>
<dbReference type="RefSeq" id="WP_004690835.1">
    <property type="nucleotide sequence ID" value="NC_010103.1"/>
</dbReference>
<dbReference type="GeneID" id="55590724"/>
<dbReference type="KEGG" id="bcs:BCAN_A1047"/>
<dbReference type="HOGENOM" id="CLU_057693_1_0_5"/>
<dbReference type="Proteomes" id="UP000001385">
    <property type="component" value="Chromosome I"/>
</dbReference>
<dbReference type="GO" id="GO:0005886">
    <property type="term" value="C:plasma membrane"/>
    <property type="evidence" value="ECO:0007669"/>
    <property type="project" value="UniProtKB-SubCell"/>
</dbReference>
<dbReference type="HAMAP" id="MF_01085">
    <property type="entry name" value="UPF0283"/>
    <property type="match status" value="1"/>
</dbReference>
<dbReference type="InterPro" id="IPR021147">
    <property type="entry name" value="DUF697"/>
</dbReference>
<dbReference type="InterPro" id="IPR006507">
    <property type="entry name" value="UPF0283"/>
</dbReference>
<dbReference type="NCBIfam" id="TIGR01620">
    <property type="entry name" value="hyp_HI0043"/>
    <property type="match status" value="1"/>
</dbReference>
<dbReference type="PANTHER" id="PTHR39342">
    <property type="entry name" value="UPF0283 MEMBRANE PROTEIN YCJF"/>
    <property type="match status" value="1"/>
</dbReference>
<dbReference type="PANTHER" id="PTHR39342:SF1">
    <property type="entry name" value="UPF0283 MEMBRANE PROTEIN YCJF"/>
    <property type="match status" value="1"/>
</dbReference>
<dbReference type="Pfam" id="PF05128">
    <property type="entry name" value="DUF697"/>
    <property type="match status" value="1"/>
</dbReference>
<accession>A9MB47</accession>
<comment type="subcellular location">
    <subcellularLocation>
        <location evidence="1">Cell inner membrane</location>
        <topology evidence="1">Multi-pass membrane protein</topology>
    </subcellularLocation>
</comment>
<comment type="similarity">
    <text evidence="1">Belongs to the UPF0283 family.</text>
</comment>